<gene>
    <name evidence="1" type="primary">thiE</name>
    <name type="ordered locus">LAF_0801</name>
</gene>
<evidence type="ECO:0000255" key="1">
    <source>
        <dbReference type="HAMAP-Rule" id="MF_00097"/>
    </source>
</evidence>
<organism>
    <name type="scientific">Limosilactobacillus fermentum (strain NBRC 3956 / LMG 18251)</name>
    <name type="common">Lactobacillus fermentum</name>
    <dbReference type="NCBI Taxonomy" id="334390"/>
    <lineage>
        <taxon>Bacteria</taxon>
        <taxon>Bacillati</taxon>
        <taxon>Bacillota</taxon>
        <taxon>Bacilli</taxon>
        <taxon>Lactobacillales</taxon>
        <taxon>Lactobacillaceae</taxon>
        <taxon>Limosilactobacillus</taxon>
    </lineage>
</organism>
<dbReference type="EC" id="2.5.1.3" evidence="1"/>
<dbReference type="EMBL" id="AP008937">
    <property type="protein sequence ID" value="BAG27137.1"/>
    <property type="molecule type" value="Genomic_DNA"/>
</dbReference>
<dbReference type="RefSeq" id="WP_003685076.1">
    <property type="nucleotide sequence ID" value="NC_010610.1"/>
</dbReference>
<dbReference type="SMR" id="B2GBV5"/>
<dbReference type="KEGG" id="lfe:LAF_0801"/>
<dbReference type="eggNOG" id="COG0352">
    <property type="taxonomic scope" value="Bacteria"/>
</dbReference>
<dbReference type="HOGENOM" id="CLU_018272_3_2_9"/>
<dbReference type="UniPathway" id="UPA00060">
    <property type="reaction ID" value="UER00141"/>
</dbReference>
<dbReference type="Proteomes" id="UP000001697">
    <property type="component" value="Chromosome"/>
</dbReference>
<dbReference type="GO" id="GO:0005737">
    <property type="term" value="C:cytoplasm"/>
    <property type="evidence" value="ECO:0007669"/>
    <property type="project" value="TreeGrafter"/>
</dbReference>
<dbReference type="GO" id="GO:0000287">
    <property type="term" value="F:magnesium ion binding"/>
    <property type="evidence" value="ECO:0007669"/>
    <property type="project" value="UniProtKB-UniRule"/>
</dbReference>
<dbReference type="GO" id="GO:0004789">
    <property type="term" value="F:thiamine-phosphate diphosphorylase activity"/>
    <property type="evidence" value="ECO:0007669"/>
    <property type="project" value="UniProtKB-UniRule"/>
</dbReference>
<dbReference type="GO" id="GO:0009228">
    <property type="term" value="P:thiamine biosynthetic process"/>
    <property type="evidence" value="ECO:0007669"/>
    <property type="project" value="UniProtKB-KW"/>
</dbReference>
<dbReference type="GO" id="GO:0009229">
    <property type="term" value="P:thiamine diphosphate biosynthetic process"/>
    <property type="evidence" value="ECO:0007669"/>
    <property type="project" value="UniProtKB-UniRule"/>
</dbReference>
<dbReference type="CDD" id="cd00564">
    <property type="entry name" value="TMP_TenI"/>
    <property type="match status" value="1"/>
</dbReference>
<dbReference type="FunFam" id="3.20.20.70:FF:000096">
    <property type="entry name" value="Thiamine-phosphate synthase"/>
    <property type="match status" value="1"/>
</dbReference>
<dbReference type="Gene3D" id="3.20.20.70">
    <property type="entry name" value="Aldolase class I"/>
    <property type="match status" value="1"/>
</dbReference>
<dbReference type="HAMAP" id="MF_00097">
    <property type="entry name" value="TMP_synthase"/>
    <property type="match status" value="1"/>
</dbReference>
<dbReference type="InterPro" id="IPR013785">
    <property type="entry name" value="Aldolase_TIM"/>
</dbReference>
<dbReference type="InterPro" id="IPR036206">
    <property type="entry name" value="ThiamineP_synth_sf"/>
</dbReference>
<dbReference type="InterPro" id="IPR022998">
    <property type="entry name" value="ThiamineP_synth_TenI"/>
</dbReference>
<dbReference type="InterPro" id="IPR034291">
    <property type="entry name" value="TMP_synthase"/>
</dbReference>
<dbReference type="NCBIfam" id="TIGR00693">
    <property type="entry name" value="thiE"/>
    <property type="match status" value="1"/>
</dbReference>
<dbReference type="PANTHER" id="PTHR20857">
    <property type="entry name" value="THIAMINE-PHOSPHATE PYROPHOSPHORYLASE"/>
    <property type="match status" value="1"/>
</dbReference>
<dbReference type="PANTHER" id="PTHR20857:SF15">
    <property type="entry name" value="THIAMINE-PHOSPHATE SYNTHASE"/>
    <property type="match status" value="1"/>
</dbReference>
<dbReference type="Pfam" id="PF02581">
    <property type="entry name" value="TMP-TENI"/>
    <property type="match status" value="1"/>
</dbReference>
<dbReference type="SUPFAM" id="SSF51391">
    <property type="entry name" value="Thiamin phosphate synthase"/>
    <property type="match status" value="1"/>
</dbReference>
<proteinExistence type="inferred from homology"/>
<sequence>MLFKNEILRCYLIGGSQDTHHDPDEFLTKVEAAMQAGITAFQYREKGTSTLSKAETLALGQQVRELATKYGVPLFVDDDLELAAAIKADGIHVGQKDQRIEEVLAAVSDQLMVGYSCNTAAQVAHANQLNVDYIGTGPVFPTISKDDAGSALGVDGLADFVEQSAHPVVAIGGISLDNVGATLTSGCAGLSMISMVLGADDVAGTVKKILELY</sequence>
<protein>
    <recommendedName>
        <fullName evidence="1">Thiamine-phosphate synthase</fullName>
        <shortName evidence="1">TP synthase</shortName>
        <shortName evidence="1">TPS</shortName>
        <ecNumber evidence="1">2.5.1.3</ecNumber>
    </recommendedName>
    <alternativeName>
        <fullName evidence="1">Thiamine-phosphate pyrophosphorylase</fullName>
        <shortName evidence="1">TMP pyrophosphorylase</shortName>
        <shortName evidence="1">TMP-PPase</shortName>
    </alternativeName>
</protein>
<comment type="function">
    <text evidence="1">Condenses 4-methyl-5-(beta-hydroxyethyl)thiazole monophosphate (THZ-P) and 2-methyl-4-amino-5-hydroxymethyl pyrimidine pyrophosphate (HMP-PP) to form thiamine monophosphate (TMP).</text>
</comment>
<comment type="catalytic activity">
    <reaction evidence="1">
        <text>2-[(2R,5Z)-2-carboxy-4-methylthiazol-5(2H)-ylidene]ethyl phosphate + 4-amino-2-methyl-5-(diphosphooxymethyl)pyrimidine + 2 H(+) = thiamine phosphate + CO2 + diphosphate</text>
        <dbReference type="Rhea" id="RHEA:47844"/>
        <dbReference type="ChEBI" id="CHEBI:15378"/>
        <dbReference type="ChEBI" id="CHEBI:16526"/>
        <dbReference type="ChEBI" id="CHEBI:33019"/>
        <dbReference type="ChEBI" id="CHEBI:37575"/>
        <dbReference type="ChEBI" id="CHEBI:57841"/>
        <dbReference type="ChEBI" id="CHEBI:62899"/>
        <dbReference type="EC" id="2.5.1.3"/>
    </reaction>
</comment>
<comment type="catalytic activity">
    <reaction evidence="1">
        <text>2-(2-carboxy-4-methylthiazol-5-yl)ethyl phosphate + 4-amino-2-methyl-5-(diphosphooxymethyl)pyrimidine + 2 H(+) = thiamine phosphate + CO2 + diphosphate</text>
        <dbReference type="Rhea" id="RHEA:47848"/>
        <dbReference type="ChEBI" id="CHEBI:15378"/>
        <dbReference type="ChEBI" id="CHEBI:16526"/>
        <dbReference type="ChEBI" id="CHEBI:33019"/>
        <dbReference type="ChEBI" id="CHEBI:37575"/>
        <dbReference type="ChEBI" id="CHEBI:57841"/>
        <dbReference type="ChEBI" id="CHEBI:62890"/>
        <dbReference type="EC" id="2.5.1.3"/>
    </reaction>
</comment>
<comment type="catalytic activity">
    <reaction evidence="1">
        <text>4-methyl-5-(2-phosphooxyethyl)-thiazole + 4-amino-2-methyl-5-(diphosphooxymethyl)pyrimidine + H(+) = thiamine phosphate + diphosphate</text>
        <dbReference type="Rhea" id="RHEA:22328"/>
        <dbReference type="ChEBI" id="CHEBI:15378"/>
        <dbReference type="ChEBI" id="CHEBI:33019"/>
        <dbReference type="ChEBI" id="CHEBI:37575"/>
        <dbReference type="ChEBI" id="CHEBI:57841"/>
        <dbReference type="ChEBI" id="CHEBI:58296"/>
        <dbReference type="EC" id="2.5.1.3"/>
    </reaction>
</comment>
<comment type="cofactor">
    <cofactor evidence="1">
        <name>Mg(2+)</name>
        <dbReference type="ChEBI" id="CHEBI:18420"/>
    </cofactor>
    <text evidence="1">Binds 1 Mg(2+) ion per subunit.</text>
</comment>
<comment type="pathway">
    <text evidence="1">Cofactor biosynthesis; thiamine diphosphate biosynthesis; thiamine phosphate from 4-amino-2-methyl-5-diphosphomethylpyrimidine and 4-methyl-5-(2-phosphoethyl)-thiazole: step 1/1.</text>
</comment>
<comment type="similarity">
    <text evidence="1">Belongs to the thiamine-phosphate synthase family.</text>
</comment>
<name>THIE_LIMF3</name>
<accession>B2GBV5</accession>
<reference key="1">
    <citation type="journal article" date="2008" name="DNA Res.">
        <title>Comparative genome analysis of Lactobacillus reuteri and Lactobacillus fermentum reveal a genomic island for reuterin and cobalamin production.</title>
        <authorList>
            <person name="Morita H."/>
            <person name="Toh H."/>
            <person name="Fukuda S."/>
            <person name="Horikawa H."/>
            <person name="Oshima K."/>
            <person name="Suzuki T."/>
            <person name="Murakami M."/>
            <person name="Hisamatsu S."/>
            <person name="Kato Y."/>
            <person name="Takizawa T."/>
            <person name="Fukuoka H."/>
            <person name="Yoshimura T."/>
            <person name="Itoh K."/>
            <person name="O'Sullivan D.J."/>
            <person name="McKay L.L."/>
            <person name="Ohno H."/>
            <person name="Kikuchi J."/>
            <person name="Masaoka T."/>
            <person name="Hattori M."/>
        </authorList>
    </citation>
    <scope>NUCLEOTIDE SEQUENCE [LARGE SCALE GENOMIC DNA]</scope>
    <source>
        <strain>NBRC 3956 / LMG 18251</strain>
    </source>
</reference>
<keyword id="KW-0460">Magnesium</keyword>
<keyword id="KW-0479">Metal-binding</keyword>
<keyword id="KW-1185">Reference proteome</keyword>
<keyword id="KW-0784">Thiamine biosynthesis</keyword>
<keyword id="KW-0808">Transferase</keyword>
<feature type="chain" id="PRO_1000093673" description="Thiamine-phosphate synthase">
    <location>
        <begin position="1"/>
        <end position="213"/>
    </location>
</feature>
<feature type="binding site" evidence="1">
    <location>
        <begin position="42"/>
        <end position="46"/>
    </location>
    <ligand>
        <name>4-amino-2-methyl-5-(diphosphooxymethyl)pyrimidine</name>
        <dbReference type="ChEBI" id="CHEBI:57841"/>
    </ligand>
</feature>
<feature type="binding site" evidence="1">
    <location>
        <position position="77"/>
    </location>
    <ligand>
        <name>4-amino-2-methyl-5-(diphosphooxymethyl)pyrimidine</name>
        <dbReference type="ChEBI" id="CHEBI:57841"/>
    </ligand>
</feature>
<feature type="binding site" evidence="1">
    <location>
        <position position="78"/>
    </location>
    <ligand>
        <name>Mg(2+)</name>
        <dbReference type="ChEBI" id="CHEBI:18420"/>
    </ligand>
</feature>
<feature type="binding site" evidence="1">
    <location>
        <position position="97"/>
    </location>
    <ligand>
        <name>Mg(2+)</name>
        <dbReference type="ChEBI" id="CHEBI:18420"/>
    </ligand>
</feature>
<feature type="binding site" evidence="1">
    <location>
        <position position="116"/>
    </location>
    <ligand>
        <name>4-amino-2-methyl-5-(diphosphooxymethyl)pyrimidine</name>
        <dbReference type="ChEBI" id="CHEBI:57841"/>
    </ligand>
</feature>
<feature type="binding site" evidence="1">
    <location>
        <begin position="142"/>
        <end position="144"/>
    </location>
    <ligand>
        <name>2-[(2R,5Z)-2-carboxy-4-methylthiazol-5(2H)-ylidene]ethyl phosphate</name>
        <dbReference type="ChEBI" id="CHEBI:62899"/>
    </ligand>
</feature>
<feature type="binding site" evidence="1">
    <location>
        <position position="145"/>
    </location>
    <ligand>
        <name>4-amino-2-methyl-5-(diphosphooxymethyl)pyrimidine</name>
        <dbReference type="ChEBI" id="CHEBI:57841"/>
    </ligand>
</feature>
<feature type="binding site" evidence="1">
    <location>
        <position position="173"/>
    </location>
    <ligand>
        <name>2-[(2R,5Z)-2-carboxy-4-methylthiazol-5(2H)-ylidene]ethyl phosphate</name>
        <dbReference type="ChEBI" id="CHEBI:62899"/>
    </ligand>
</feature>
<feature type="binding site" evidence="1">
    <location>
        <begin position="193"/>
        <end position="194"/>
    </location>
    <ligand>
        <name>2-[(2R,5Z)-2-carboxy-4-methylthiazol-5(2H)-ylidene]ethyl phosphate</name>
        <dbReference type="ChEBI" id="CHEBI:62899"/>
    </ligand>
</feature>